<accession>C3N7P3</accession>
<gene>
    <name evidence="1" type="primary">upp</name>
    <name type="ordered locus">YG5714_1981</name>
</gene>
<reference key="1">
    <citation type="journal article" date="2009" name="Proc. Natl. Acad. Sci. U.S.A.">
        <title>Biogeography of the Sulfolobus islandicus pan-genome.</title>
        <authorList>
            <person name="Reno M.L."/>
            <person name="Held N.L."/>
            <person name="Fields C.J."/>
            <person name="Burke P.V."/>
            <person name="Whitaker R.J."/>
        </authorList>
    </citation>
    <scope>NUCLEOTIDE SEQUENCE [LARGE SCALE GENOMIC DNA]</scope>
    <source>
        <strain>Y.G.57.14 / Yellowstone #1</strain>
    </source>
</reference>
<protein>
    <recommendedName>
        <fullName evidence="1">Uracil phosphoribosyltransferase</fullName>
        <ecNumber evidence="1">2.4.2.9</ecNumber>
    </recommendedName>
    <alternativeName>
        <fullName evidence="1">UMP pyrophosphorylase</fullName>
    </alternativeName>
    <alternativeName>
        <fullName evidence="1">UPRTase</fullName>
    </alternativeName>
</protein>
<dbReference type="EC" id="2.4.2.9" evidence="1"/>
<dbReference type="EMBL" id="CP001403">
    <property type="protein sequence ID" value="ACP46237.1"/>
    <property type="molecule type" value="Genomic_DNA"/>
</dbReference>
<dbReference type="RefSeq" id="WP_012711878.1">
    <property type="nucleotide sequence ID" value="NC_012622.1"/>
</dbReference>
<dbReference type="SMR" id="C3N7P3"/>
<dbReference type="GeneID" id="84059260"/>
<dbReference type="KEGG" id="siy:YG5714_1981"/>
<dbReference type="HOGENOM" id="CLU_067096_2_0_2"/>
<dbReference type="UniPathway" id="UPA00574">
    <property type="reaction ID" value="UER00636"/>
</dbReference>
<dbReference type="Proteomes" id="UP000002308">
    <property type="component" value="Chromosome"/>
</dbReference>
<dbReference type="GO" id="GO:0005525">
    <property type="term" value="F:GTP binding"/>
    <property type="evidence" value="ECO:0007669"/>
    <property type="project" value="UniProtKB-KW"/>
</dbReference>
<dbReference type="GO" id="GO:0000287">
    <property type="term" value="F:magnesium ion binding"/>
    <property type="evidence" value="ECO:0007669"/>
    <property type="project" value="UniProtKB-UniRule"/>
</dbReference>
<dbReference type="GO" id="GO:0004845">
    <property type="term" value="F:uracil phosphoribosyltransferase activity"/>
    <property type="evidence" value="ECO:0007669"/>
    <property type="project" value="UniProtKB-UniRule"/>
</dbReference>
<dbReference type="GO" id="GO:0044206">
    <property type="term" value="P:UMP salvage"/>
    <property type="evidence" value="ECO:0007669"/>
    <property type="project" value="UniProtKB-UniRule"/>
</dbReference>
<dbReference type="GO" id="GO:0006223">
    <property type="term" value="P:uracil salvage"/>
    <property type="evidence" value="ECO:0007669"/>
    <property type="project" value="InterPro"/>
</dbReference>
<dbReference type="CDD" id="cd06223">
    <property type="entry name" value="PRTases_typeI"/>
    <property type="match status" value="1"/>
</dbReference>
<dbReference type="Gene3D" id="3.40.50.2020">
    <property type="match status" value="1"/>
</dbReference>
<dbReference type="HAMAP" id="MF_01218_A">
    <property type="entry name" value="Upp_A"/>
    <property type="match status" value="1"/>
</dbReference>
<dbReference type="InterPro" id="IPR000836">
    <property type="entry name" value="PRibTrfase_dom"/>
</dbReference>
<dbReference type="InterPro" id="IPR029057">
    <property type="entry name" value="PRTase-like"/>
</dbReference>
<dbReference type="InterPro" id="IPR034331">
    <property type="entry name" value="Upp_A"/>
</dbReference>
<dbReference type="InterPro" id="IPR005765">
    <property type="entry name" value="Ura_phspho_trans"/>
</dbReference>
<dbReference type="NCBIfam" id="NF001097">
    <property type="entry name" value="PRK00129.1"/>
    <property type="match status" value="1"/>
</dbReference>
<dbReference type="NCBIfam" id="TIGR01091">
    <property type="entry name" value="upp"/>
    <property type="match status" value="1"/>
</dbReference>
<dbReference type="Pfam" id="PF14681">
    <property type="entry name" value="UPRTase"/>
    <property type="match status" value="1"/>
</dbReference>
<dbReference type="SUPFAM" id="SSF53271">
    <property type="entry name" value="PRTase-like"/>
    <property type="match status" value="1"/>
</dbReference>
<feature type="chain" id="PRO_1000213944" description="Uracil phosphoribosyltransferase">
    <location>
        <begin position="1"/>
        <end position="216"/>
    </location>
</feature>
<feature type="binding site" evidence="1">
    <location>
        <begin position="30"/>
        <end position="34"/>
    </location>
    <ligand>
        <name>GTP</name>
        <dbReference type="ChEBI" id="CHEBI:37565"/>
    </ligand>
</feature>
<feature type="binding site" evidence="1">
    <location>
        <position position="80"/>
    </location>
    <ligand>
        <name>5-phospho-alpha-D-ribose 1-diphosphate</name>
        <dbReference type="ChEBI" id="CHEBI:58017"/>
    </ligand>
</feature>
<feature type="binding site" evidence="1">
    <location>
        <position position="105"/>
    </location>
    <ligand>
        <name>5-phospho-alpha-D-ribose 1-diphosphate</name>
        <dbReference type="ChEBI" id="CHEBI:58017"/>
    </ligand>
</feature>
<feature type="binding site" evidence="1">
    <location>
        <begin position="140"/>
        <end position="148"/>
    </location>
    <ligand>
        <name>5-phospho-alpha-D-ribose 1-diphosphate</name>
        <dbReference type="ChEBI" id="CHEBI:58017"/>
    </ligand>
</feature>
<feature type="binding site" evidence="1">
    <location>
        <position position="203"/>
    </location>
    <ligand>
        <name>uracil</name>
        <dbReference type="ChEBI" id="CHEBI:17568"/>
    </ligand>
</feature>
<feature type="binding site" evidence="1">
    <location>
        <begin position="208"/>
        <end position="210"/>
    </location>
    <ligand>
        <name>uracil</name>
        <dbReference type="ChEBI" id="CHEBI:17568"/>
    </ligand>
</feature>
<feature type="binding site" evidence="1">
    <location>
        <position position="209"/>
    </location>
    <ligand>
        <name>5-phospho-alpha-D-ribose 1-diphosphate</name>
        <dbReference type="ChEBI" id="CHEBI:58017"/>
    </ligand>
</feature>
<evidence type="ECO:0000255" key="1">
    <source>
        <dbReference type="HAMAP-Rule" id="MF_01218"/>
    </source>
</evidence>
<proteinExistence type="inferred from homology"/>
<sequence>MPLYVIDKPLTLHILTQLRDKNTDQINFRKNLVRLGRILGYEIANTLDYEIVEVETPLGARTKGIDITDLNNIVIINILRAAVPLVEGLLKAFPKARQGVIGASRVEVDGKEVPKDMDVYIYYKKIPNIRAKVDNVIIADPMIATASTMLKVLEEVVRANPKRIYIVSIISSEYGANKILSKYPFIYLFTVTIDPELNNKGYILPGLGDAGDRAFG</sequence>
<organism>
    <name type="scientific">Saccharolobus islandicus (strain Y.G.57.14 / Yellowstone #1)</name>
    <name type="common">Sulfolobus islandicus</name>
    <dbReference type="NCBI Taxonomy" id="439386"/>
    <lineage>
        <taxon>Archaea</taxon>
        <taxon>Thermoproteota</taxon>
        <taxon>Thermoprotei</taxon>
        <taxon>Sulfolobales</taxon>
        <taxon>Sulfolobaceae</taxon>
        <taxon>Saccharolobus</taxon>
    </lineage>
</organism>
<comment type="function">
    <text evidence="1">Catalyzes the conversion of uracil and 5-phospho-alpha-D-ribose 1-diphosphate (PRPP) to UMP and diphosphate.</text>
</comment>
<comment type="catalytic activity">
    <reaction evidence="1">
        <text>UMP + diphosphate = 5-phospho-alpha-D-ribose 1-diphosphate + uracil</text>
        <dbReference type="Rhea" id="RHEA:13017"/>
        <dbReference type="ChEBI" id="CHEBI:17568"/>
        <dbReference type="ChEBI" id="CHEBI:33019"/>
        <dbReference type="ChEBI" id="CHEBI:57865"/>
        <dbReference type="ChEBI" id="CHEBI:58017"/>
        <dbReference type="EC" id="2.4.2.9"/>
    </reaction>
</comment>
<comment type="cofactor">
    <cofactor evidence="1">
        <name>Mg(2+)</name>
        <dbReference type="ChEBI" id="CHEBI:18420"/>
    </cofactor>
    <text evidence="1">Binds 1 Mg(2+) ion per subunit. The magnesium is bound as Mg-PRPP.</text>
</comment>
<comment type="activity regulation">
    <text evidence="1">Allosterically activated by GTP.</text>
</comment>
<comment type="pathway">
    <text evidence="1">Pyrimidine metabolism; UMP biosynthesis via salvage pathway; UMP from uracil: step 1/1.</text>
</comment>
<comment type="similarity">
    <text evidence="1">Belongs to the UPRTase family.</text>
</comment>
<keyword id="KW-0021">Allosteric enzyme</keyword>
<keyword id="KW-0328">Glycosyltransferase</keyword>
<keyword id="KW-0342">GTP-binding</keyword>
<keyword id="KW-0460">Magnesium</keyword>
<keyword id="KW-0547">Nucleotide-binding</keyword>
<keyword id="KW-0808">Transferase</keyword>
<name>UPP_SACI7</name>